<sequence>MEIIMIFVSGILTAISVYLVLSKSLIRIVMGTTLLTHAANLFLITMGGLKHGTVPIYEANVKSYVDPIPQALILTAIVIAFATTAFFLVLAFRTYKELGTDNVESMKGVPEDD</sequence>
<evidence type="ECO:0000250" key="1"/>
<evidence type="ECO:0000255" key="2"/>
<evidence type="ECO:0000305" key="3"/>
<comment type="function">
    <text evidence="1">Mnh complex is a Na(+)/H(+) antiporter involved in Na(+) excretion.</text>
</comment>
<comment type="subunit">
    <text evidence="1">May form a heterooligomeric complex that consists of seven subunits: mnhA1, mnhB1, mnhC1, mnhD1, mnhE1, mnhF1 and mnhG1.</text>
</comment>
<comment type="subcellular location">
    <subcellularLocation>
        <location evidence="3">Cell membrane</location>
        <topology evidence="3">Multi-pass membrane protein</topology>
    </subcellularLocation>
</comment>
<comment type="similarity">
    <text evidence="3">Belongs to the CPA3 antiporters (TC 2.A.63) subunit C family.</text>
</comment>
<comment type="sequence caution" evidence="3">
    <conflict type="erroneous initiation">
        <sequence resource="EMBL-CDS" id="ABD21648"/>
    </conflict>
</comment>
<accession>Q2FIC5</accession>
<protein>
    <recommendedName>
        <fullName>Na(+)/H(+) antiporter subunit C1</fullName>
    </recommendedName>
    <alternativeName>
        <fullName>Mnh complex subunit C1</fullName>
    </alternativeName>
</protein>
<keyword id="KW-0050">Antiport</keyword>
<keyword id="KW-1003">Cell membrane</keyword>
<keyword id="KW-0375">Hydrogen ion transport</keyword>
<keyword id="KW-0406">Ion transport</keyword>
<keyword id="KW-0472">Membrane</keyword>
<keyword id="KW-0915">Sodium</keyword>
<keyword id="KW-0739">Sodium transport</keyword>
<keyword id="KW-0812">Transmembrane</keyword>
<keyword id="KW-1133">Transmembrane helix</keyword>
<keyword id="KW-0813">Transport</keyword>
<name>MNHC1_STAA3</name>
<reference key="1">
    <citation type="journal article" date="2006" name="Lancet">
        <title>Complete genome sequence of USA300, an epidemic clone of community-acquired meticillin-resistant Staphylococcus aureus.</title>
        <authorList>
            <person name="Diep B.A."/>
            <person name="Gill S.R."/>
            <person name="Chang R.F."/>
            <person name="Phan T.H."/>
            <person name="Chen J.H."/>
            <person name="Davidson M.G."/>
            <person name="Lin F."/>
            <person name="Lin J."/>
            <person name="Carleton H.A."/>
            <person name="Mongodin E.F."/>
            <person name="Sensabaugh G.F."/>
            <person name="Perdreau-Remington F."/>
        </authorList>
    </citation>
    <scope>NUCLEOTIDE SEQUENCE [LARGE SCALE GENOMIC DNA]</scope>
    <source>
        <strain>USA300</strain>
    </source>
</reference>
<feature type="chain" id="PRO_0000372124" description="Na(+)/H(+) antiporter subunit C1">
    <location>
        <begin position="1"/>
        <end position="113"/>
    </location>
</feature>
<feature type="transmembrane region" description="Helical" evidence="2">
    <location>
        <begin position="6"/>
        <end position="26"/>
    </location>
</feature>
<feature type="transmembrane region" description="Helical" evidence="2">
    <location>
        <begin position="28"/>
        <end position="48"/>
    </location>
</feature>
<feature type="transmembrane region" description="Helical" evidence="2">
    <location>
        <begin position="72"/>
        <end position="92"/>
    </location>
</feature>
<gene>
    <name type="primary">mnhC1</name>
    <name type="ordered locus">SAUSA300_0853</name>
</gene>
<dbReference type="EMBL" id="CP000255">
    <property type="protein sequence ID" value="ABD21648.1"/>
    <property type="status" value="ALT_INIT"/>
    <property type="molecule type" value="Genomic_DNA"/>
</dbReference>
<dbReference type="RefSeq" id="WP_000402803.1">
    <property type="nucleotide sequence ID" value="NZ_CP027476.1"/>
</dbReference>
<dbReference type="SMR" id="Q2FIC5"/>
<dbReference type="GeneID" id="98345271"/>
<dbReference type="KEGG" id="saa:SAUSA300_0853"/>
<dbReference type="HOGENOM" id="CLU_082058_3_1_9"/>
<dbReference type="OMA" id="YRVYEEH"/>
<dbReference type="Proteomes" id="UP000001939">
    <property type="component" value="Chromosome"/>
</dbReference>
<dbReference type="GO" id="GO:0005886">
    <property type="term" value="C:plasma membrane"/>
    <property type="evidence" value="ECO:0007669"/>
    <property type="project" value="UniProtKB-SubCell"/>
</dbReference>
<dbReference type="GO" id="GO:0015297">
    <property type="term" value="F:antiporter activity"/>
    <property type="evidence" value="ECO:0007669"/>
    <property type="project" value="UniProtKB-KW"/>
</dbReference>
<dbReference type="GO" id="GO:0008324">
    <property type="term" value="F:monoatomic cation transmembrane transporter activity"/>
    <property type="evidence" value="ECO:0007669"/>
    <property type="project" value="InterPro"/>
</dbReference>
<dbReference type="GO" id="GO:1902600">
    <property type="term" value="P:proton transmembrane transport"/>
    <property type="evidence" value="ECO:0007669"/>
    <property type="project" value="UniProtKB-KW"/>
</dbReference>
<dbReference type="GO" id="GO:0006814">
    <property type="term" value="P:sodium ion transport"/>
    <property type="evidence" value="ECO:0007669"/>
    <property type="project" value="UniProtKB-KW"/>
</dbReference>
<dbReference type="Gene3D" id="1.10.287.3510">
    <property type="match status" value="1"/>
</dbReference>
<dbReference type="InterPro" id="IPR050601">
    <property type="entry name" value="CPA3_antiporter_subunitC"/>
</dbReference>
<dbReference type="InterPro" id="IPR006673">
    <property type="entry name" value="Mnh_C1_su"/>
</dbReference>
<dbReference type="InterPro" id="IPR039428">
    <property type="entry name" value="NUOK/Mnh_C1-like"/>
</dbReference>
<dbReference type="NCBIfam" id="TIGR00941">
    <property type="entry name" value="2a6301s03"/>
    <property type="match status" value="1"/>
</dbReference>
<dbReference type="NCBIfam" id="NF006372">
    <property type="entry name" value="PRK08600.1"/>
    <property type="match status" value="1"/>
</dbReference>
<dbReference type="NCBIfam" id="NF006573">
    <property type="entry name" value="PRK09094.1"/>
    <property type="match status" value="1"/>
</dbReference>
<dbReference type="NCBIfam" id="NF009303">
    <property type="entry name" value="PRK12660.1"/>
    <property type="match status" value="1"/>
</dbReference>
<dbReference type="PANTHER" id="PTHR34583">
    <property type="entry name" value="ANTIPORTER SUBUNIT MNHC2-RELATED"/>
    <property type="match status" value="1"/>
</dbReference>
<dbReference type="PANTHER" id="PTHR34583:SF2">
    <property type="entry name" value="ANTIPORTER SUBUNIT MNHC2-RELATED"/>
    <property type="match status" value="1"/>
</dbReference>
<dbReference type="Pfam" id="PF00420">
    <property type="entry name" value="Oxidored_q2"/>
    <property type="match status" value="1"/>
</dbReference>
<proteinExistence type="inferred from homology"/>
<organism>
    <name type="scientific">Staphylococcus aureus (strain USA300)</name>
    <dbReference type="NCBI Taxonomy" id="367830"/>
    <lineage>
        <taxon>Bacteria</taxon>
        <taxon>Bacillati</taxon>
        <taxon>Bacillota</taxon>
        <taxon>Bacilli</taxon>
        <taxon>Bacillales</taxon>
        <taxon>Staphylococcaceae</taxon>
        <taxon>Staphylococcus</taxon>
    </lineage>
</organism>